<dbReference type="EMBL" id="AJ851615">
    <property type="protein sequence ID" value="CAH65249.1"/>
    <property type="molecule type" value="mRNA"/>
</dbReference>
<dbReference type="RefSeq" id="NP_001012884.1">
    <property type="nucleotide sequence ID" value="NM_001012866.1"/>
</dbReference>
<dbReference type="RefSeq" id="XP_046767512.1">
    <property type="nucleotide sequence ID" value="XM_046911556.1"/>
</dbReference>
<dbReference type="RefSeq" id="XP_046767513.1">
    <property type="nucleotide sequence ID" value="XM_046911557.1"/>
</dbReference>
<dbReference type="RefSeq" id="XP_046767514.1">
    <property type="nucleotide sequence ID" value="XM_046911558.1"/>
</dbReference>
<dbReference type="SMR" id="Q5F3N5"/>
<dbReference type="STRING" id="9031.ENSGALP00000055320"/>
<dbReference type="PaxDb" id="9031-ENSGALP00000024458"/>
<dbReference type="GeneID" id="421100"/>
<dbReference type="KEGG" id="gga:421100"/>
<dbReference type="CTD" id="57565"/>
<dbReference type="VEuPathDB" id="HostDB:geneid_421100"/>
<dbReference type="eggNOG" id="KOG4441">
    <property type="taxonomic scope" value="Eukaryota"/>
</dbReference>
<dbReference type="InParanoid" id="Q5F3N5"/>
<dbReference type="OrthoDB" id="6350321at2759"/>
<dbReference type="PhylomeDB" id="Q5F3N5"/>
<dbReference type="PRO" id="PR:Q5F3N5"/>
<dbReference type="Proteomes" id="UP000000539">
    <property type="component" value="Unassembled WGS sequence"/>
</dbReference>
<dbReference type="GO" id="GO:0005829">
    <property type="term" value="C:cytosol"/>
    <property type="evidence" value="ECO:0007669"/>
    <property type="project" value="UniProtKB-SubCell"/>
</dbReference>
<dbReference type="GO" id="GO:0005783">
    <property type="term" value="C:endoplasmic reticulum"/>
    <property type="evidence" value="ECO:0000318"/>
    <property type="project" value="GO_Central"/>
</dbReference>
<dbReference type="GO" id="GO:0005789">
    <property type="term" value="C:endoplasmic reticulum membrane"/>
    <property type="evidence" value="ECO:0007669"/>
    <property type="project" value="UniProtKB-SubCell"/>
</dbReference>
<dbReference type="GO" id="GO:0043005">
    <property type="term" value="C:neuron projection"/>
    <property type="evidence" value="ECO:0000318"/>
    <property type="project" value="GO_Central"/>
</dbReference>
<dbReference type="GO" id="GO:0043025">
    <property type="term" value="C:neuronal cell body"/>
    <property type="evidence" value="ECO:0000318"/>
    <property type="project" value="GO_Central"/>
</dbReference>
<dbReference type="CDD" id="cd18453">
    <property type="entry name" value="BACK_KLHL14"/>
    <property type="match status" value="1"/>
</dbReference>
<dbReference type="CDD" id="cd18243">
    <property type="entry name" value="BTB_POZ_KLHL14_printor"/>
    <property type="match status" value="1"/>
</dbReference>
<dbReference type="FunFam" id="2.120.10.80:FF:000099">
    <property type="entry name" value="Kelch like family member 14"/>
    <property type="match status" value="1"/>
</dbReference>
<dbReference type="FunFam" id="1.25.40.420:FF:000010">
    <property type="entry name" value="Kelch-like family member 14"/>
    <property type="match status" value="1"/>
</dbReference>
<dbReference type="Gene3D" id="1.25.40.420">
    <property type="match status" value="1"/>
</dbReference>
<dbReference type="Gene3D" id="2.120.10.80">
    <property type="entry name" value="Kelch-type beta propeller"/>
    <property type="match status" value="2"/>
</dbReference>
<dbReference type="Gene3D" id="3.30.710.10">
    <property type="entry name" value="Potassium Channel Kv1.1, Chain A"/>
    <property type="match status" value="1"/>
</dbReference>
<dbReference type="InterPro" id="IPR011705">
    <property type="entry name" value="BACK"/>
</dbReference>
<dbReference type="InterPro" id="IPR017096">
    <property type="entry name" value="BTB-kelch_protein"/>
</dbReference>
<dbReference type="InterPro" id="IPR000210">
    <property type="entry name" value="BTB/POZ_dom"/>
</dbReference>
<dbReference type="InterPro" id="IPR015915">
    <property type="entry name" value="Kelch-typ_b-propeller"/>
</dbReference>
<dbReference type="InterPro" id="IPR006652">
    <property type="entry name" value="Kelch_1"/>
</dbReference>
<dbReference type="InterPro" id="IPR047027">
    <property type="entry name" value="KLHL14_BACK"/>
</dbReference>
<dbReference type="InterPro" id="IPR030584">
    <property type="entry name" value="KLHL14_BTB_POZ"/>
</dbReference>
<dbReference type="InterPro" id="IPR011333">
    <property type="entry name" value="SKP1/BTB/POZ_sf"/>
</dbReference>
<dbReference type="PANTHER" id="PTHR45632:SF6">
    <property type="entry name" value="KELCH-LIKE PROTEIN 14"/>
    <property type="match status" value="1"/>
</dbReference>
<dbReference type="PANTHER" id="PTHR45632">
    <property type="entry name" value="LD33804P"/>
    <property type="match status" value="1"/>
</dbReference>
<dbReference type="Pfam" id="PF07707">
    <property type="entry name" value="BACK"/>
    <property type="match status" value="1"/>
</dbReference>
<dbReference type="Pfam" id="PF00651">
    <property type="entry name" value="BTB"/>
    <property type="match status" value="2"/>
</dbReference>
<dbReference type="Pfam" id="PF01344">
    <property type="entry name" value="Kelch_1"/>
    <property type="match status" value="1"/>
</dbReference>
<dbReference type="Pfam" id="PF24681">
    <property type="entry name" value="Kelch_KLHDC2_KLHL20_DRC7"/>
    <property type="match status" value="1"/>
</dbReference>
<dbReference type="PIRSF" id="PIRSF037037">
    <property type="entry name" value="Kelch-like_protein_gigaxonin"/>
    <property type="match status" value="1"/>
</dbReference>
<dbReference type="SMART" id="SM00875">
    <property type="entry name" value="BACK"/>
    <property type="match status" value="1"/>
</dbReference>
<dbReference type="SMART" id="SM00225">
    <property type="entry name" value="BTB"/>
    <property type="match status" value="1"/>
</dbReference>
<dbReference type="SMART" id="SM00612">
    <property type="entry name" value="Kelch"/>
    <property type="match status" value="6"/>
</dbReference>
<dbReference type="SUPFAM" id="SSF117281">
    <property type="entry name" value="Kelch motif"/>
    <property type="match status" value="1"/>
</dbReference>
<dbReference type="SUPFAM" id="SSF54695">
    <property type="entry name" value="POZ domain"/>
    <property type="match status" value="1"/>
</dbReference>
<dbReference type="PROSITE" id="PS50097">
    <property type="entry name" value="BTB"/>
    <property type="match status" value="1"/>
</dbReference>
<feature type="chain" id="PRO_0000119118" description="Kelch-like protein 14">
    <location>
        <begin position="1"/>
        <end position="622"/>
    </location>
</feature>
<feature type="domain" description="BTB" evidence="2">
    <location>
        <begin position="33"/>
        <end position="145"/>
    </location>
</feature>
<feature type="repeat" description="Kelch 1">
    <location>
        <begin position="317"/>
        <end position="366"/>
    </location>
</feature>
<feature type="repeat" description="Kelch 2">
    <location>
        <begin position="367"/>
        <end position="418"/>
    </location>
</feature>
<feature type="repeat" description="Kelch 3">
    <location>
        <begin position="419"/>
        <end position="465"/>
    </location>
</feature>
<feature type="repeat" description="Kelch 4">
    <location>
        <begin position="467"/>
        <end position="512"/>
    </location>
</feature>
<feature type="repeat" description="Kelch 5">
    <location>
        <begin position="514"/>
        <end position="564"/>
    </location>
</feature>
<feature type="repeat" description="Kelch 6">
    <location>
        <begin position="566"/>
        <end position="614"/>
    </location>
</feature>
<feature type="region of interest" description="Disordered" evidence="3">
    <location>
        <begin position="73"/>
        <end position="108"/>
    </location>
</feature>
<feature type="compositionally biased region" description="Pro residues" evidence="3">
    <location>
        <begin position="87"/>
        <end position="96"/>
    </location>
</feature>
<reference key="1">
    <citation type="journal article" date="2005" name="Genome Biol.">
        <title>Full-length cDNAs from chicken bursal lymphocytes to facilitate gene function analysis.</title>
        <authorList>
            <person name="Caldwell R.B."/>
            <person name="Kierzek A.M."/>
            <person name="Arakawa H."/>
            <person name="Bezzubov Y."/>
            <person name="Zaim J."/>
            <person name="Fiedler P."/>
            <person name="Kutter S."/>
            <person name="Blagodatski A."/>
            <person name="Kostovska D."/>
            <person name="Koter M."/>
            <person name="Plachy J."/>
            <person name="Carninci P."/>
            <person name="Hayashizaki Y."/>
            <person name="Buerstedde J.-M."/>
        </authorList>
    </citation>
    <scope>NUCLEOTIDE SEQUENCE [LARGE SCALE MRNA]</scope>
    <source>
        <strain>CB</strain>
        <tissue>Bursa of Fabricius</tissue>
    </source>
</reference>
<organism>
    <name type="scientific">Gallus gallus</name>
    <name type="common">Chicken</name>
    <dbReference type="NCBI Taxonomy" id="9031"/>
    <lineage>
        <taxon>Eukaryota</taxon>
        <taxon>Metazoa</taxon>
        <taxon>Chordata</taxon>
        <taxon>Craniata</taxon>
        <taxon>Vertebrata</taxon>
        <taxon>Euteleostomi</taxon>
        <taxon>Archelosauria</taxon>
        <taxon>Archosauria</taxon>
        <taxon>Dinosauria</taxon>
        <taxon>Saurischia</taxon>
        <taxon>Theropoda</taxon>
        <taxon>Coelurosauria</taxon>
        <taxon>Aves</taxon>
        <taxon>Neognathae</taxon>
        <taxon>Galloanserae</taxon>
        <taxon>Galliformes</taxon>
        <taxon>Phasianidae</taxon>
        <taxon>Phasianinae</taxon>
        <taxon>Gallus</taxon>
    </lineage>
</organism>
<protein>
    <recommendedName>
        <fullName>Kelch-like protein 14</fullName>
    </recommendedName>
</protein>
<sequence length="622" mass="69698">MSRSGDRTSTFDPSHSDNLLHGLNLLWRKQLFCDVTLTAQGQQFHCHKAVLASCSQYFRSLFSSGGGHPHALALGPGAQDGLGGAPPKEPPPPPQEEPGTPSSSPEDKLLASPRAINNLVLQGCSSIGLRLVLEYLYTANVTLSLDTVEEVLSVSKILHIPQVTKLCVQFLNDQISVQNYKQVCKIAALHGLEETKKLANKYLVEDVLLLNFEEMRALLDSLPPPVESELALFQMSVLWLEHDRETRMQYAPDLMKRLRFALIPAPELVERVQSVDFMRTDPVCQKLLLDAMNYHLMPFRQHCRQSLASRIRSNKKMLLLVGGLPPGPDRLPSNLVQYYDDEKKTWKILTIMPYNSAHHCVVEVENFLFVLGGEDQWNPNGKHSTNFVSRYDPRFNSWIQLPPMQERRASFYACRLDKNLYVIGGRNETGYLSSVECYNLETNEWRYVSSLPQPLAAHAGAVHNGKIYISGGVHNGEYVPWLYCYDPVMDVWARKQDMNTKRAIHTLAVMNDRLYAIGGNHLKGFSHLDVMLVECYDPKGDQWNILQTPILEGRSGPGCAVLDDSIYLVGGYSWSMGAYKSSTICYSPEKGTWTELEGDVAEPLAGPACSTVILPACVPYNK</sequence>
<accession>Q5F3N5</accession>
<keyword id="KW-0963">Cytoplasm</keyword>
<keyword id="KW-0256">Endoplasmic reticulum</keyword>
<keyword id="KW-0880">Kelch repeat</keyword>
<keyword id="KW-0472">Membrane</keyword>
<keyword id="KW-1185">Reference proteome</keyword>
<keyword id="KW-0677">Repeat</keyword>
<comment type="subcellular location">
    <subcellularLocation>
        <location evidence="1">Cytoplasm</location>
        <location evidence="1">Cytosol</location>
    </subcellularLocation>
    <subcellularLocation>
        <location evidence="1">Endoplasmic reticulum membrane</location>
    </subcellularLocation>
</comment>
<proteinExistence type="evidence at transcript level"/>
<name>KLH14_CHICK</name>
<evidence type="ECO:0000250" key="1"/>
<evidence type="ECO:0000255" key="2">
    <source>
        <dbReference type="PROSITE-ProRule" id="PRU00037"/>
    </source>
</evidence>
<evidence type="ECO:0000256" key="3">
    <source>
        <dbReference type="SAM" id="MobiDB-lite"/>
    </source>
</evidence>
<gene>
    <name type="primary">KLHL14</name>
    <name type="ORF">RCJMB04_11g14</name>
</gene>